<feature type="signal peptide" evidence="2">
    <location>
        <begin position="1"/>
        <end position="39"/>
    </location>
</feature>
<feature type="propeptide" id="PRO_0000023486" evidence="5">
    <location>
        <begin position="40"/>
        <end position="229"/>
    </location>
</feature>
<feature type="chain" id="PRO_0000023487" description="Pectinesterase 1">
    <location>
        <begin position="230"/>
        <end position="546"/>
    </location>
</feature>
<feature type="active site" description="Proton donor" evidence="3">
    <location>
        <position position="361"/>
    </location>
</feature>
<feature type="active site" description="Nucleophile" evidence="3">
    <location>
        <position position="382"/>
    </location>
</feature>
<feature type="binding site" evidence="1">
    <location>
        <position position="308"/>
    </location>
    <ligand>
        <name>substrate</name>
    </ligand>
</feature>
<feature type="binding site" evidence="1">
    <location>
        <position position="338"/>
    </location>
    <ligand>
        <name>substrate</name>
    </ligand>
</feature>
<feature type="binding site" evidence="1">
    <location>
        <position position="450"/>
    </location>
    <ligand>
        <name>substrate</name>
    </ligand>
</feature>
<feature type="binding site" evidence="1">
    <location>
        <position position="452"/>
    </location>
    <ligand>
        <name>substrate</name>
    </ligand>
</feature>
<feature type="site" description="Transition state stabilizer" evidence="1">
    <location>
        <position position="360"/>
    </location>
</feature>
<feature type="disulfide bond" evidence="4">
    <location>
        <begin position="327"/>
        <end position="354"/>
    </location>
</feature>
<feature type="disulfide bond" evidence="4">
    <location>
        <begin position="395"/>
        <end position="429"/>
    </location>
</feature>
<feature type="sequence conflict" description="In Ref. 2; AAB67740." evidence="6" ref="2">
    <original>F</original>
    <variation>L</variation>
    <location>
        <position position="204"/>
    </location>
</feature>
<feature type="sequence conflict" description="In Ref. 2; AAB67740." evidence="6" ref="2">
    <original>A</original>
    <variation>S</variation>
    <location>
        <position position="278"/>
    </location>
</feature>
<feature type="sequence conflict" description="In Ref. 2; AAB67740." evidence="6" ref="2">
    <original>N</original>
    <variation>D</variation>
    <location>
        <position position="430"/>
    </location>
</feature>
<feature type="sequence conflict" description="In Ref. 2; AAB67740." evidence="6" ref="2">
    <original>V</original>
    <variation>L</variation>
    <location>
        <position position="440"/>
    </location>
</feature>
<feature type="sequence conflict" description="In Ref. 2; AAB67740." evidence="6" ref="2">
    <original>M</original>
    <variation>I</variation>
    <location>
        <position position="519"/>
    </location>
</feature>
<feature type="strand" evidence="7">
    <location>
        <begin position="233"/>
        <end position="236"/>
    </location>
</feature>
<feature type="strand" evidence="7">
    <location>
        <begin position="242"/>
        <end position="246"/>
    </location>
</feature>
<feature type="helix" evidence="7">
    <location>
        <begin position="247"/>
        <end position="253"/>
    </location>
</feature>
<feature type="strand" evidence="7">
    <location>
        <begin position="262"/>
        <end position="266"/>
    </location>
</feature>
<feature type="strand" evidence="7">
    <location>
        <begin position="268"/>
        <end position="272"/>
    </location>
</feature>
<feature type="strand" evidence="7">
    <location>
        <begin position="275"/>
        <end position="277"/>
    </location>
</feature>
<feature type="strand" evidence="7">
    <location>
        <begin position="283"/>
        <end position="289"/>
    </location>
</feature>
<feature type="turn" evidence="7">
    <location>
        <begin position="291"/>
        <end position="293"/>
    </location>
</feature>
<feature type="strand" evidence="7">
    <location>
        <begin position="294"/>
        <end position="298"/>
    </location>
</feature>
<feature type="turn" evidence="7">
    <location>
        <begin position="302"/>
        <end position="305"/>
    </location>
</feature>
<feature type="helix" evidence="7">
    <location>
        <begin position="309"/>
        <end position="311"/>
    </location>
</feature>
<feature type="strand" evidence="7">
    <location>
        <begin position="313"/>
        <end position="316"/>
    </location>
</feature>
<feature type="strand" evidence="7">
    <location>
        <begin position="322"/>
        <end position="325"/>
    </location>
</feature>
<feature type="strand" evidence="7">
    <location>
        <begin position="327"/>
        <end position="330"/>
    </location>
</feature>
<feature type="helix" evidence="7">
    <location>
        <begin position="334"/>
        <end position="336"/>
    </location>
</feature>
<feature type="strand" evidence="7">
    <location>
        <begin position="341"/>
        <end position="344"/>
    </location>
</feature>
<feature type="strand" evidence="7">
    <location>
        <begin position="349"/>
        <end position="353"/>
    </location>
</feature>
<feature type="strand" evidence="7">
    <location>
        <begin position="355"/>
        <end position="357"/>
    </location>
</feature>
<feature type="strand" evidence="7">
    <location>
        <begin position="363"/>
        <end position="365"/>
    </location>
</feature>
<feature type="strand" evidence="7">
    <location>
        <begin position="367"/>
        <end position="374"/>
    </location>
</feature>
<feature type="strand" evidence="7">
    <location>
        <begin position="376"/>
        <end position="382"/>
    </location>
</feature>
<feature type="strand" evidence="7">
    <location>
        <begin position="384"/>
        <end position="386"/>
    </location>
</feature>
<feature type="strand" evidence="7">
    <location>
        <begin position="389"/>
        <end position="394"/>
    </location>
</feature>
<feature type="strand" evidence="7">
    <location>
        <begin position="396"/>
        <end position="399"/>
    </location>
</feature>
<feature type="strand" evidence="7">
    <location>
        <begin position="408"/>
        <end position="413"/>
    </location>
</feature>
<feature type="strand" evidence="7">
    <location>
        <begin position="423"/>
        <end position="428"/>
    </location>
</feature>
<feature type="strand" evidence="7">
    <location>
        <begin position="430"/>
        <end position="433"/>
    </location>
</feature>
<feature type="turn" evidence="7">
    <location>
        <begin position="435"/>
        <end position="437"/>
    </location>
</feature>
<feature type="helix" evidence="7">
    <location>
        <begin position="438"/>
        <end position="440"/>
    </location>
</feature>
<feature type="turn" evidence="7">
    <location>
        <begin position="441"/>
        <end position="443"/>
    </location>
</feature>
<feature type="strand" evidence="7">
    <location>
        <begin position="446"/>
        <end position="449"/>
    </location>
</feature>
<feature type="strand" evidence="7">
    <location>
        <begin position="457"/>
        <end position="462"/>
    </location>
</feature>
<feature type="turn" evidence="7">
    <location>
        <begin position="479"/>
        <end position="485"/>
    </location>
</feature>
<feature type="strand" evidence="7">
    <location>
        <begin position="487"/>
        <end position="492"/>
    </location>
</feature>
<feature type="strand" evidence="7">
    <location>
        <begin position="509"/>
        <end position="512"/>
    </location>
</feature>
<feature type="helix" evidence="7">
    <location>
        <begin position="515"/>
        <end position="518"/>
    </location>
</feature>
<feature type="helix" evidence="7">
    <location>
        <begin position="519"/>
        <end position="521"/>
    </location>
</feature>
<feature type="helix" evidence="7">
    <location>
        <begin position="523"/>
        <end position="526"/>
    </location>
</feature>
<feature type="helix" evidence="7">
    <location>
        <begin position="530"/>
        <end position="533"/>
    </location>
</feature>
<feature type="helix" evidence="7">
    <location>
        <begin position="534"/>
        <end position="536"/>
    </location>
</feature>
<keyword id="KW-0002">3D-structure</keyword>
<keyword id="KW-0063">Aspartyl esterase</keyword>
<keyword id="KW-0134">Cell wall</keyword>
<keyword id="KW-0961">Cell wall biogenesis/degradation</keyword>
<keyword id="KW-0903">Direct protein sequencing</keyword>
<keyword id="KW-1015">Disulfide bond</keyword>
<keyword id="KW-0292">Fruit ripening</keyword>
<keyword id="KW-0378">Hydrolase</keyword>
<keyword id="KW-1185">Reference proteome</keyword>
<keyword id="KW-0964">Secreted</keyword>
<keyword id="KW-0732">Signal</keyword>
<keyword id="KW-0865">Zymogen</keyword>
<organism>
    <name type="scientific">Solanum lycopersicum</name>
    <name type="common">Tomato</name>
    <name type="synonym">Lycopersicon esculentum</name>
    <dbReference type="NCBI Taxonomy" id="4081"/>
    <lineage>
        <taxon>Eukaryota</taxon>
        <taxon>Viridiplantae</taxon>
        <taxon>Streptophyta</taxon>
        <taxon>Embryophyta</taxon>
        <taxon>Tracheophyta</taxon>
        <taxon>Spermatophyta</taxon>
        <taxon>Magnoliopsida</taxon>
        <taxon>eudicotyledons</taxon>
        <taxon>Gunneridae</taxon>
        <taxon>Pentapetalae</taxon>
        <taxon>asterids</taxon>
        <taxon>lamiids</taxon>
        <taxon>Solanales</taxon>
        <taxon>Solanaceae</taxon>
        <taxon>Solanoideae</taxon>
        <taxon>Solaneae</taxon>
        <taxon>Solanum</taxon>
        <taxon>Solanum subgen. Lycopersicon</taxon>
    </lineage>
</organism>
<protein>
    <recommendedName>
        <fullName>Pectinesterase 1</fullName>
        <shortName>PE 1</shortName>
        <ecNumber>3.1.1.11</ecNumber>
    </recommendedName>
    <alternativeName>
        <fullName>Pectin methylesterase 1</fullName>
    </alternativeName>
</protein>
<gene>
    <name type="primary">PME1.9</name>
</gene>
<sequence length="546" mass="60066">MANPQQPLLIKTHKQNPIISFKILSFVITLFVALFLVAPYQVEIKHSNLCKTAQDSQLCLSYVSDLISNEIVTTESDGHSILMKFLVNYVHQMNNAIPVVRKMKNQINDIRQHGALTDCLELLDQSVDFASDSIAAIDKRSRSEHANAQSWLSGVLTNHVTCLDELDSFTKAMINGTNLEELISRAKVALAMLASLTTQDEDVFMTVLGKMPSWVSSMDRKLMESSGKDIIANAVVAQDGTGDYQTLAEAVAAAPDKSKTRYVIYVKRGTYKENVEVASNKMNLMIVGDGMYATTITGSLNVVDGSTTFRSATLAAVGQGFILQDICIQNTAGPAKDQAVALRVGADMSVINRCRIDAYQDTLYAHSQRQFYRDSYVTGTVDFIFGNAAVVFQKCQLVARKPGKYQQNMVTAQGRTDPNQATGTSIQFCNIIASSDLEPVLKEFPTYLGRPWKEYSRTVVMESYLGGLINPAGWAEWDGDFALKTLYYGEFMNNGPGAGTSKRVKWPGYHVITDPAKAMPFTVAKLIQGGSWLRSTGVAYVDGLYD</sequence>
<reference key="1">
    <citation type="journal article" date="1994" name="Plant Mol. Biol.">
        <title>Molecular characterisation of cDNA clones representing pectin esterase isozymes from tomato.</title>
        <authorList>
            <person name="Hall L.N."/>
            <person name="Bird C.R."/>
            <person name="Picton S."/>
            <person name="Tucker G.A."/>
            <person name="Seymour G.B."/>
            <person name="Grierson D."/>
        </authorList>
    </citation>
    <scope>NUCLEOTIDE SEQUENCE [MRNA]</scope>
    <source>
        <strain>cv. Ailsa Craig</strain>
        <tissue>Pericarp</tissue>
    </source>
</reference>
<reference key="2">
    <citation type="online journal article" date="1996" name="Plant Gene Register">
        <title>Isolation and nucleotide sequence of two cDNAs corresponding to tomato fruit pectin methylesterase genes.</title>
        <authorList>
            <person name="Turner L.A."/>
            <person name="Kausch K.D."/>
            <person name="Handa A.K."/>
        </authorList>
        <locator>PGR96-035</locator>
    </citation>
    <scope>NUCLEOTIDE SEQUENCE [MRNA] OF 117-546</scope>
    <source>
        <strain>cv. Rutgers</strain>
    </source>
</reference>
<reference key="3">
    <citation type="journal article" date="1986" name="Eur. J. Biochem.">
        <title>Pectinesterase. The primary structure of the tomato enzyme.</title>
        <authorList>
            <person name="Markovic O."/>
            <person name="Joernvall H."/>
        </authorList>
    </citation>
    <scope>PROTEIN SEQUENCE OF 230-546</scope>
</reference>
<reference key="4">
    <citation type="journal article" date="1990" name="Protein Seq. Data Anal.">
        <title>Tomato and Aspergillus niger pectinesterases. Correlation of differences in existing reports: large species variations.</title>
        <authorList>
            <person name="Markovic O."/>
            <person name="Joernvall H."/>
        </authorList>
    </citation>
    <scope>SEQUENCE REVISION</scope>
</reference>
<reference key="5">
    <citation type="submission" date="1996-03" db="UniProtKB">
        <authorList>
            <person name="Markovic O."/>
            <person name="Joernvall H."/>
        </authorList>
    </citation>
    <scope>SEQUENCE REVISION</scope>
</reference>
<reference key="6">
    <citation type="journal article" date="1992" name="Protein Sci.">
        <title>Disulfide bridges in tomato pectinesterase: variations from pectinesterases of other species; conservation of possible active site segments.</title>
        <authorList>
            <person name="Markovic O."/>
            <person name="Joernvall H."/>
        </authorList>
    </citation>
    <scope>DISULFIDE BONDS</scope>
</reference>
<reference key="7">
    <citation type="journal article" date="2003" name="Proteins">
        <title>Tomato pectin methylesterase: modeling, fluorescence, and inhibitor interaction studies-comparison with the bacterial (Erwinia chrysanthemi) enzyme.</title>
        <authorList>
            <person name="D'Avino R."/>
            <person name="Camardella L."/>
            <person name="Christensen T.M."/>
            <person name="Giovane A."/>
            <person name="Servillo L."/>
        </authorList>
    </citation>
    <scope>X-RAY CRYSTALLOGRAPHY (1.9 ANGSTROMS) OF 230-546 IN COMPLEX WITH KIWI PMEI</scope>
</reference>
<accession>P14280</accession>
<accession>Q43145</accession>
<dbReference type="EC" id="3.1.1.11"/>
<dbReference type="EMBL" id="X74638">
    <property type="protein sequence ID" value="CAA52703.1"/>
    <property type="molecule type" value="mRNA"/>
</dbReference>
<dbReference type="EMBL" id="U50986">
    <property type="protein sequence ID" value="AAB67740.1"/>
    <property type="molecule type" value="mRNA"/>
</dbReference>
<dbReference type="PIR" id="A25010">
    <property type="entry name" value="A25010"/>
</dbReference>
<dbReference type="PIR" id="S46527">
    <property type="entry name" value="S46527"/>
</dbReference>
<dbReference type="RefSeq" id="NP_001234151.1">
    <property type="nucleotide sequence ID" value="NM_001247222.2"/>
</dbReference>
<dbReference type="PDB" id="1XG2">
    <property type="method" value="X-ray"/>
    <property type="resolution" value="1.90 A"/>
    <property type="chains" value="A=230-546"/>
</dbReference>
<dbReference type="PDBsum" id="1XG2"/>
<dbReference type="SMR" id="P14280"/>
<dbReference type="STRING" id="4081.P14280"/>
<dbReference type="PaxDb" id="4081-Solyc07g064170.2.1"/>
<dbReference type="GeneID" id="544090"/>
<dbReference type="KEGG" id="sly:544090"/>
<dbReference type="eggNOG" id="ENOG502QUQ5">
    <property type="taxonomic scope" value="Eukaryota"/>
</dbReference>
<dbReference type="HOGENOM" id="CLU_012243_9_2_1"/>
<dbReference type="InParanoid" id="P14280"/>
<dbReference type="OrthoDB" id="2019149at2759"/>
<dbReference type="PhylomeDB" id="P14280"/>
<dbReference type="BioCyc" id="MetaCyc:MONOMER-16134"/>
<dbReference type="BRENDA" id="3.1.1.11">
    <property type="organism ID" value="3101"/>
</dbReference>
<dbReference type="UniPathway" id="UPA00545">
    <property type="reaction ID" value="UER00823"/>
</dbReference>
<dbReference type="EvolutionaryTrace" id="P14280"/>
<dbReference type="Proteomes" id="UP000004994">
    <property type="component" value="Unplaced"/>
</dbReference>
<dbReference type="ExpressionAtlas" id="P14280">
    <property type="expression patterns" value="baseline and differential"/>
</dbReference>
<dbReference type="GO" id="GO:0005576">
    <property type="term" value="C:extracellular region"/>
    <property type="evidence" value="ECO:0007669"/>
    <property type="project" value="UniProtKB-KW"/>
</dbReference>
<dbReference type="GO" id="GO:0030599">
    <property type="term" value="F:pectinesterase activity"/>
    <property type="evidence" value="ECO:0000318"/>
    <property type="project" value="GO_Central"/>
</dbReference>
<dbReference type="GO" id="GO:0046910">
    <property type="term" value="F:pectinesterase inhibitor activity"/>
    <property type="evidence" value="ECO:0000318"/>
    <property type="project" value="GO_Central"/>
</dbReference>
<dbReference type="GO" id="GO:0042545">
    <property type="term" value="P:cell wall modification"/>
    <property type="evidence" value="ECO:0007669"/>
    <property type="project" value="InterPro"/>
</dbReference>
<dbReference type="GO" id="GO:0009835">
    <property type="term" value="P:fruit ripening"/>
    <property type="evidence" value="ECO:0007669"/>
    <property type="project" value="UniProtKB-KW"/>
</dbReference>
<dbReference type="GO" id="GO:0045490">
    <property type="term" value="P:pectin catabolic process"/>
    <property type="evidence" value="ECO:0007669"/>
    <property type="project" value="UniProtKB-UniPathway"/>
</dbReference>
<dbReference type="CDD" id="cd15799">
    <property type="entry name" value="PMEI-like_4"/>
    <property type="match status" value="1"/>
</dbReference>
<dbReference type="FunFam" id="2.160.20.10:FF:000001">
    <property type="entry name" value="Pectinesterase"/>
    <property type="match status" value="1"/>
</dbReference>
<dbReference type="FunFam" id="1.20.140.40:FF:000015">
    <property type="entry name" value="Pectinesterase 3"/>
    <property type="match status" value="1"/>
</dbReference>
<dbReference type="Gene3D" id="1.20.140.40">
    <property type="entry name" value="Invertase/pectin methylesterase inhibitor family protein"/>
    <property type="match status" value="1"/>
</dbReference>
<dbReference type="Gene3D" id="2.160.20.10">
    <property type="entry name" value="Single-stranded right-handed beta-helix, Pectin lyase-like"/>
    <property type="match status" value="1"/>
</dbReference>
<dbReference type="InterPro" id="IPR035513">
    <property type="entry name" value="Invertase/methylesterase_inhib"/>
</dbReference>
<dbReference type="InterPro" id="IPR012334">
    <property type="entry name" value="Pectin_lyas_fold"/>
</dbReference>
<dbReference type="InterPro" id="IPR011050">
    <property type="entry name" value="Pectin_lyase_fold/virulence"/>
</dbReference>
<dbReference type="InterPro" id="IPR033131">
    <property type="entry name" value="Pectinesterase_Asp_AS"/>
</dbReference>
<dbReference type="InterPro" id="IPR000070">
    <property type="entry name" value="Pectinesterase_cat"/>
</dbReference>
<dbReference type="InterPro" id="IPR006501">
    <property type="entry name" value="Pectinesterase_inhib_dom"/>
</dbReference>
<dbReference type="InterPro" id="IPR018040">
    <property type="entry name" value="Pectinesterase_Tyr_AS"/>
</dbReference>
<dbReference type="NCBIfam" id="TIGR01614">
    <property type="entry name" value="PME_inhib"/>
    <property type="match status" value="1"/>
</dbReference>
<dbReference type="PANTHER" id="PTHR31707">
    <property type="entry name" value="PECTINESTERASE"/>
    <property type="match status" value="1"/>
</dbReference>
<dbReference type="Pfam" id="PF01095">
    <property type="entry name" value="Pectinesterase"/>
    <property type="match status" value="1"/>
</dbReference>
<dbReference type="Pfam" id="PF04043">
    <property type="entry name" value="PMEI"/>
    <property type="match status" value="1"/>
</dbReference>
<dbReference type="SMART" id="SM00856">
    <property type="entry name" value="PMEI"/>
    <property type="match status" value="1"/>
</dbReference>
<dbReference type="SUPFAM" id="SSF51126">
    <property type="entry name" value="Pectin lyase-like"/>
    <property type="match status" value="1"/>
</dbReference>
<dbReference type="SUPFAM" id="SSF101148">
    <property type="entry name" value="Plant invertase/pectin methylesterase inhibitor"/>
    <property type="match status" value="1"/>
</dbReference>
<dbReference type="PROSITE" id="PS00800">
    <property type="entry name" value="PECTINESTERASE_1"/>
    <property type="match status" value="1"/>
</dbReference>
<dbReference type="PROSITE" id="PS00503">
    <property type="entry name" value="PECTINESTERASE_2"/>
    <property type="match status" value="1"/>
</dbReference>
<evidence type="ECO:0000250" key="1"/>
<evidence type="ECO:0000255" key="2"/>
<evidence type="ECO:0000255" key="3">
    <source>
        <dbReference type="PROSITE-ProRule" id="PRU10040"/>
    </source>
</evidence>
<evidence type="ECO:0000269" key="4">
    <source>
    </source>
</evidence>
<evidence type="ECO:0000269" key="5">
    <source>
    </source>
</evidence>
<evidence type="ECO:0000305" key="6"/>
<evidence type="ECO:0007829" key="7">
    <source>
        <dbReference type="PDB" id="1XG2"/>
    </source>
</evidence>
<comment type="function">
    <text>Pectinesterase may play a role in cell wall metabolism during fruit growth and development prior to ripening and may be required for preparing cell walls for softening by polygalacturonase during fruit ripening.</text>
</comment>
<comment type="catalytic activity">
    <reaction>
        <text>[(1-&gt;4)-alpha-D-galacturonosyl methyl ester](n) + n H2O = [(1-&gt;4)-alpha-D-galacturonosyl](n) + n methanol + n H(+)</text>
        <dbReference type="Rhea" id="RHEA:22380"/>
        <dbReference type="Rhea" id="RHEA-COMP:14570"/>
        <dbReference type="Rhea" id="RHEA-COMP:14573"/>
        <dbReference type="ChEBI" id="CHEBI:15377"/>
        <dbReference type="ChEBI" id="CHEBI:15378"/>
        <dbReference type="ChEBI" id="CHEBI:17790"/>
        <dbReference type="ChEBI" id="CHEBI:140522"/>
        <dbReference type="ChEBI" id="CHEBI:140523"/>
        <dbReference type="EC" id="3.1.1.11"/>
    </reaction>
</comment>
<comment type="pathway">
    <text>Glycan metabolism; pectin degradation; 2-dehydro-3-deoxy-D-gluconate from pectin: step 1/5.</text>
</comment>
<comment type="subcellular location">
    <subcellularLocation>
        <location>Secreted</location>
        <location>Cell wall</location>
    </subcellularLocation>
</comment>
<comment type="developmental stage">
    <text>In ripening fruit.</text>
</comment>
<comment type="miscellaneous">
    <text>The PMEI region may act as an autoinhibitory domain and prevent untimely PME activity during transport.</text>
</comment>
<comment type="similarity">
    <text evidence="6">In the N-terminal section; belongs to the PMEI family.</text>
</comment>
<comment type="similarity">
    <text evidence="6">In the C-terminal section; belongs to the pectinesterase family.</text>
</comment>
<name>PME1_SOLLC</name>
<proteinExistence type="evidence at protein level"/>